<protein>
    <recommendedName>
        <fullName evidence="1">Large ribosomal subunit protein bL21</fullName>
    </recommendedName>
    <alternativeName>
        <fullName evidence="2">50S ribosomal protein L21</fullName>
    </alternativeName>
</protein>
<keyword id="KW-1185">Reference proteome</keyword>
<keyword id="KW-0687">Ribonucleoprotein</keyword>
<keyword id="KW-0689">Ribosomal protein</keyword>
<keyword id="KW-0694">RNA-binding</keyword>
<keyword id="KW-0699">rRNA-binding</keyword>
<accession>Q5Z043</accession>
<name>RL21_NOCFA</name>
<organism>
    <name type="scientific">Nocardia farcinica (strain IFM 10152)</name>
    <dbReference type="NCBI Taxonomy" id="247156"/>
    <lineage>
        <taxon>Bacteria</taxon>
        <taxon>Bacillati</taxon>
        <taxon>Actinomycetota</taxon>
        <taxon>Actinomycetes</taxon>
        <taxon>Mycobacteriales</taxon>
        <taxon>Nocardiaceae</taxon>
        <taxon>Nocardia</taxon>
    </lineage>
</organism>
<comment type="function">
    <text evidence="1">This protein binds to 23S rRNA in the presence of protein L20.</text>
</comment>
<comment type="subunit">
    <text evidence="1">Part of the 50S ribosomal subunit. Contacts protein L20.</text>
</comment>
<comment type="similarity">
    <text evidence="1">Belongs to the bacterial ribosomal protein bL21 family.</text>
</comment>
<feature type="chain" id="PRO_0000270700" description="Large ribosomal subunit protein bL21">
    <location>
        <begin position="1"/>
        <end position="103"/>
    </location>
</feature>
<evidence type="ECO:0000255" key="1">
    <source>
        <dbReference type="HAMAP-Rule" id="MF_01363"/>
    </source>
</evidence>
<evidence type="ECO:0000305" key="2"/>
<reference key="1">
    <citation type="journal article" date="2004" name="Proc. Natl. Acad. Sci. U.S.A.">
        <title>The complete genomic sequence of Nocardia farcinica IFM 10152.</title>
        <authorList>
            <person name="Ishikawa J."/>
            <person name="Yamashita A."/>
            <person name="Mikami Y."/>
            <person name="Hoshino Y."/>
            <person name="Kurita H."/>
            <person name="Hotta K."/>
            <person name="Shiba T."/>
            <person name="Hattori M."/>
        </authorList>
    </citation>
    <scope>NUCLEOTIDE SEQUENCE [LARGE SCALE GENOMIC DNA]</scope>
    <source>
        <strain>IFM 10152</strain>
    </source>
</reference>
<sequence length="103" mass="11149">MATYAIVKTGGKQYKVAVGDLVKVEKIEGEPGAAVELSPVLVVDGAELTTEAEALAKRSVTAELVEQTKGPKIRIHKFKNKTGYHKRQGHRQPLTVLKVTGIK</sequence>
<proteinExistence type="inferred from homology"/>
<dbReference type="EMBL" id="AP006618">
    <property type="protein sequence ID" value="BAD56198.1"/>
    <property type="molecule type" value="Genomic_DNA"/>
</dbReference>
<dbReference type="RefSeq" id="WP_011207883.1">
    <property type="nucleotide sequence ID" value="NC_006361.1"/>
</dbReference>
<dbReference type="SMR" id="Q5Z043"/>
<dbReference type="STRING" id="247156.NFA_13530"/>
<dbReference type="GeneID" id="61132175"/>
<dbReference type="KEGG" id="nfa:NFA_13530"/>
<dbReference type="eggNOG" id="COG0261">
    <property type="taxonomic scope" value="Bacteria"/>
</dbReference>
<dbReference type="HOGENOM" id="CLU_061463_3_0_11"/>
<dbReference type="OrthoDB" id="9813334at2"/>
<dbReference type="Proteomes" id="UP000006820">
    <property type="component" value="Chromosome"/>
</dbReference>
<dbReference type="GO" id="GO:0005737">
    <property type="term" value="C:cytoplasm"/>
    <property type="evidence" value="ECO:0007669"/>
    <property type="project" value="UniProtKB-ARBA"/>
</dbReference>
<dbReference type="GO" id="GO:1990904">
    <property type="term" value="C:ribonucleoprotein complex"/>
    <property type="evidence" value="ECO:0007669"/>
    <property type="project" value="UniProtKB-KW"/>
</dbReference>
<dbReference type="GO" id="GO:0005840">
    <property type="term" value="C:ribosome"/>
    <property type="evidence" value="ECO:0007669"/>
    <property type="project" value="UniProtKB-KW"/>
</dbReference>
<dbReference type="GO" id="GO:0019843">
    <property type="term" value="F:rRNA binding"/>
    <property type="evidence" value="ECO:0007669"/>
    <property type="project" value="UniProtKB-UniRule"/>
</dbReference>
<dbReference type="GO" id="GO:0003735">
    <property type="term" value="F:structural constituent of ribosome"/>
    <property type="evidence" value="ECO:0007669"/>
    <property type="project" value="InterPro"/>
</dbReference>
<dbReference type="GO" id="GO:0006412">
    <property type="term" value="P:translation"/>
    <property type="evidence" value="ECO:0007669"/>
    <property type="project" value="UniProtKB-UniRule"/>
</dbReference>
<dbReference type="HAMAP" id="MF_01363">
    <property type="entry name" value="Ribosomal_bL21"/>
    <property type="match status" value="1"/>
</dbReference>
<dbReference type="InterPro" id="IPR028909">
    <property type="entry name" value="bL21-like"/>
</dbReference>
<dbReference type="InterPro" id="IPR036164">
    <property type="entry name" value="bL21-like_sf"/>
</dbReference>
<dbReference type="InterPro" id="IPR001787">
    <property type="entry name" value="Ribosomal_bL21"/>
</dbReference>
<dbReference type="InterPro" id="IPR018258">
    <property type="entry name" value="Ribosomal_bL21_CS"/>
</dbReference>
<dbReference type="NCBIfam" id="TIGR00061">
    <property type="entry name" value="L21"/>
    <property type="match status" value="1"/>
</dbReference>
<dbReference type="PANTHER" id="PTHR21349">
    <property type="entry name" value="50S RIBOSOMAL PROTEIN L21"/>
    <property type="match status" value="1"/>
</dbReference>
<dbReference type="PANTHER" id="PTHR21349:SF0">
    <property type="entry name" value="LARGE RIBOSOMAL SUBUNIT PROTEIN BL21M"/>
    <property type="match status" value="1"/>
</dbReference>
<dbReference type="Pfam" id="PF00829">
    <property type="entry name" value="Ribosomal_L21p"/>
    <property type="match status" value="1"/>
</dbReference>
<dbReference type="SUPFAM" id="SSF141091">
    <property type="entry name" value="L21p-like"/>
    <property type="match status" value="1"/>
</dbReference>
<dbReference type="PROSITE" id="PS01169">
    <property type="entry name" value="RIBOSOMAL_L21"/>
    <property type="match status" value="1"/>
</dbReference>
<gene>
    <name evidence="1" type="primary">rplU</name>
    <name type="ordered locus">NFA_13530</name>
</gene>